<name>ILI6_ORYSJ</name>
<protein>
    <recommendedName>
        <fullName>Transcription factor ILI6</fullName>
        <shortName>OsILI6</shortName>
    </recommendedName>
    <alternativeName>
        <fullName>Protein INCREASED LEAF INCLINATION 6</fullName>
    </alternativeName>
    <alternativeName>
        <fullName>Protein POSITIVE REGULATOR OF GRAIN LENGTH 1</fullName>
    </alternativeName>
</protein>
<feature type="chain" id="PRO_0000429098" description="Transcription factor ILI6">
    <location>
        <begin position="1"/>
        <end position="92"/>
    </location>
</feature>
<feature type="domain" description="bHLH" evidence="1">
    <location>
        <begin position="5"/>
        <end position="59"/>
    </location>
</feature>
<feature type="region of interest" description="Disordered" evidence="2">
    <location>
        <begin position="1"/>
        <end position="20"/>
    </location>
</feature>
<evidence type="ECO:0000255" key="1">
    <source>
        <dbReference type="PROSITE-ProRule" id="PRU00981"/>
    </source>
</evidence>
<evidence type="ECO:0000256" key="2">
    <source>
        <dbReference type="SAM" id="MobiDB-lite"/>
    </source>
</evidence>
<evidence type="ECO:0000269" key="3">
    <source>
    </source>
</evidence>
<evidence type="ECO:0000305" key="4"/>
<evidence type="ECO:0000305" key="5">
    <source>
    </source>
</evidence>
<gene>
    <name type="primary">ILI6</name>
    <name type="synonym">PGL1</name>
    <name type="ordered locus">Os03g0171300</name>
    <name type="ordered locus">LOC_Os03g07510</name>
    <name type="ORF">OsJ_09588</name>
</gene>
<sequence>MSSRRSRSRQSGSSRITDEQISDLVSKLQDLLPEARLRSNDRVPSSRVLQETCNYIRSLHQEVDDLSERLSELLATSDMSSAQAAIIRSLLM</sequence>
<proteinExistence type="evidence at protein level"/>
<organism>
    <name type="scientific">Oryza sativa subsp. japonica</name>
    <name type="common">Rice</name>
    <dbReference type="NCBI Taxonomy" id="39947"/>
    <lineage>
        <taxon>Eukaryota</taxon>
        <taxon>Viridiplantae</taxon>
        <taxon>Streptophyta</taxon>
        <taxon>Embryophyta</taxon>
        <taxon>Tracheophyta</taxon>
        <taxon>Spermatophyta</taxon>
        <taxon>Magnoliopsida</taxon>
        <taxon>Liliopsida</taxon>
        <taxon>Poales</taxon>
        <taxon>Poaceae</taxon>
        <taxon>BOP clade</taxon>
        <taxon>Oryzoideae</taxon>
        <taxon>Oryzeae</taxon>
        <taxon>Oryzinae</taxon>
        <taxon>Oryza</taxon>
        <taxon>Oryza sativa</taxon>
    </lineage>
</organism>
<comment type="function">
    <text evidence="3">Atypical and probable non DNA-binding bHLH transcription factor that acts as a positive regulator of grain size. Binds the transcription repressor APG and forms a heterodimer of antagonistic bHLH transcription factors that regulates grain length and weight by controlling cell elongation in lemma and palea. May be involved in the control of lamina inclination through brassinosteroid signaling pathway.</text>
</comment>
<comment type="subunit">
    <text evidence="3">Interacts with APG.</text>
</comment>
<comment type="subcellular location">
    <subcellularLocation>
        <location evidence="1 3">Nucleus</location>
    </subcellularLocation>
</comment>
<comment type="miscellaneous">
    <text evidence="5">Plants over-expressing ILI6 show enhanced bending of the lamina joints and produce grains increased in size, caused by elongated cells in lemma.</text>
</comment>
<comment type="similarity">
    <text>Belongs to the bHLH protein family.</text>
</comment>
<comment type="sequence caution" evidence="4">
    <conflict type="erroneous gene model prediction">
        <sequence resource="EMBL-CDS" id="ABF94217"/>
    </conflict>
</comment>
<accession>Q0DUR2</accession>
<accession>A0A0P0VTW3</accession>
<accession>Q10R49</accession>
<reference key="1">
    <citation type="journal article" date="2005" name="Genome Res.">
        <title>Sequence, annotation, and analysis of synteny between rice chromosome 3 and diverged grass species.</title>
        <authorList>
            <consortium name="The rice chromosome 3 sequencing consortium"/>
            <person name="Buell C.R."/>
            <person name="Yuan Q."/>
            <person name="Ouyang S."/>
            <person name="Liu J."/>
            <person name="Zhu W."/>
            <person name="Wang A."/>
            <person name="Maiti R."/>
            <person name="Haas B."/>
            <person name="Wortman J."/>
            <person name="Pertea M."/>
            <person name="Jones K.M."/>
            <person name="Kim M."/>
            <person name="Overton L."/>
            <person name="Tsitrin T."/>
            <person name="Fadrosh D."/>
            <person name="Bera J."/>
            <person name="Weaver B."/>
            <person name="Jin S."/>
            <person name="Johri S."/>
            <person name="Reardon M."/>
            <person name="Webb K."/>
            <person name="Hill J."/>
            <person name="Moffat K."/>
            <person name="Tallon L."/>
            <person name="Van Aken S."/>
            <person name="Lewis M."/>
            <person name="Utterback T."/>
            <person name="Feldblyum T."/>
            <person name="Zismann V."/>
            <person name="Iobst S."/>
            <person name="Hsiao J."/>
            <person name="de Vazeille A.R."/>
            <person name="Salzberg S.L."/>
            <person name="White O."/>
            <person name="Fraser C.M."/>
            <person name="Yu Y."/>
            <person name="Kim H."/>
            <person name="Rambo T."/>
            <person name="Currie J."/>
            <person name="Collura K."/>
            <person name="Kernodle-Thompson S."/>
            <person name="Wei F."/>
            <person name="Kudrna K."/>
            <person name="Ammiraju J.S.S."/>
            <person name="Luo M."/>
            <person name="Goicoechea J.L."/>
            <person name="Wing R.A."/>
            <person name="Henry D."/>
            <person name="Oates R."/>
            <person name="Palmer M."/>
            <person name="Pries G."/>
            <person name="Saski C."/>
            <person name="Simmons J."/>
            <person name="Soderlund C."/>
            <person name="Nelson W."/>
            <person name="de la Bastide M."/>
            <person name="Spiegel L."/>
            <person name="Nascimento L."/>
            <person name="Huang E."/>
            <person name="Preston R."/>
            <person name="Zutavern T."/>
            <person name="Palmer L."/>
            <person name="O'Shaughnessy A."/>
            <person name="Dike S."/>
            <person name="McCombie W.R."/>
            <person name="Minx P."/>
            <person name="Cordum H."/>
            <person name="Wilson R."/>
            <person name="Jin W."/>
            <person name="Lee H.R."/>
            <person name="Jiang J."/>
            <person name="Jackson S."/>
        </authorList>
    </citation>
    <scope>NUCLEOTIDE SEQUENCE [LARGE SCALE GENOMIC DNA]</scope>
    <source>
        <strain>cv. Nipponbare</strain>
    </source>
</reference>
<reference key="2">
    <citation type="journal article" date="2005" name="Nature">
        <title>The map-based sequence of the rice genome.</title>
        <authorList>
            <consortium name="International rice genome sequencing project (IRGSP)"/>
        </authorList>
    </citation>
    <scope>NUCLEOTIDE SEQUENCE [LARGE SCALE GENOMIC DNA]</scope>
    <source>
        <strain>cv. Nipponbare</strain>
    </source>
</reference>
<reference key="3">
    <citation type="journal article" date="2008" name="Nucleic Acids Res.">
        <title>The rice annotation project database (RAP-DB): 2008 update.</title>
        <authorList>
            <consortium name="The rice annotation project (RAP)"/>
        </authorList>
    </citation>
    <scope>GENOME REANNOTATION</scope>
    <source>
        <strain>cv. Nipponbare</strain>
    </source>
</reference>
<reference key="4">
    <citation type="journal article" date="2013" name="Rice">
        <title>Improvement of the Oryza sativa Nipponbare reference genome using next generation sequence and optical map data.</title>
        <authorList>
            <person name="Kawahara Y."/>
            <person name="de la Bastide M."/>
            <person name="Hamilton J.P."/>
            <person name="Kanamori H."/>
            <person name="McCombie W.R."/>
            <person name="Ouyang S."/>
            <person name="Schwartz D.C."/>
            <person name="Tanaka T."/>
            <person name="Wu J."/>
            <person name="Zhou S."/>
            <person name="Childs K.L."/>
            <person name="Davidson R.M."/>
            <person name="Lin H."/>
            <person name="Quesada-Ocampo L."/>
            <person name="Vaillancourt B."/>
            <person name="Sakai H."/>
            <person name="Lee S.S."/>
            <person name="Kim J."/>
            <person name="Numa H."/>
            <person name="Itoh T."/>
            <person name="Buell C.R."/>
            <person name="Matsumoto T."/>
        </authorList>
    </citation>
    <scope>GENOME REANNOTATION</scope>
    <source>
        <strain>cv. Nipponbare</strain>
    </source>
</reference>
<reference key="5">
    <citation type="journal article" date="2005" name="PLoS Biol.">
        <title>The genomes of Oryza sativa: a history of duplications.</title>
        <authorList>
            <person name="Yu J."/>
            <person name="Wang J."/>
            <person name="Lin W."/>
            <person name="Li S."/>
            <person name="Li H."/>
            <person name="Zhou J."/>
            <person name="Ni P."/>
            <person name="Dong W."/>
            <person name="Hu S."/>
            <person name="Zeng C."/>
            <person name="Zhang J."/>
            <person name="Zhang Y."/>
            <person name="Li R."/>
            <person name="Xu Z."/>
            <person name="Li S."/>
            <person name="Li X."/>
            <person name="Zheng H."/>
            <person name="Cong L."/>
            <person name="Lin L."/>
            <person name="Yin J."/>
            <person name="Geng J."/>
            <person name="Li G."/>
            <person name="Shi J."/>
            <person name="Liu J."/>
            <person name="Lv H."/>
            <person name="Li J."/>
            <person name="Wang J."/>
            <person name="Deng Y."/>
            <person name="Ran L."/>
            <person name="Shi X."/>
            <person name="Wang X."/>
            <person name="Wu Q."/>
            <person name="Li C."/>
            <person name="Ren X."/>
            <person name="Wang J."/>
            <person name="Wang X."/>
            <person name="Li D."/>
            <person name="Liu D."/>
            <person name="Zhang X."/>
            <person name="Ji Z."/>
            <person name="Zhao W."/>
            <person name="Sun Y."/>
            <person name="Zhang Z."/>
            <person name="Bao J."/>
            <person name="Han Y."/>
            <person name="Dong L."/>
            <person name="Ji J."/>
            <person name="Chen P."/>
            <person name="Wu S."/>
            <person name="Liu J."/>
            <person name="Xiao Y."/>
            <person name="Bu D."/>
            <person name="Tan J."/>
            <person name="Yang L."/>
            <person name="Ye C."/>
            <person name="Zhang J."/>
            <person name="Xu J."/>
            <person name="Zhou Y."/>
            <person name="Yu Y."/>
            <person name="Zhang B."/>
            <person name="Zhuang S."/>
            <person name="Wei H."/>
            <person name="Liu B."/>
            <person name="Lei M."/>
            <person name="Yu H."/>
            <person name="Li Y."/>
            <person name="Xu H."/>
            <person name="Wei S."/>
            <person name="He X."/>
            <person name="Fang L."/>
            <person name="Zhang Z."/>
            <person name="Zhang Y."/>
            <person name="Huang X."/>
            <person name="Su Z."/>
            <person name="Tong W."/>
            <person name="Li J."/>
            <person name="Tong Z."/>
            <person name="Li S."/>
            <person name="Ye J."/>
            <person name="Wang L."/>
            <person name="Fang L."/>
            <person name="Lei T."/>
            <person name="Chen C.-S."/>
            <person name="Chen H.-C."/>
            <person name="Xu Z."/>
            <person name="Li H."/>
            <person name="Huang H."/>
            <person name="Zhang F."/>
            <person name="Xu H."/>
            <person name="Li N."/>
            <person name="Zhao C."/>
            <person name="Li S."/>
            <person name="Dong L."/>
            <person name="Huang Y."/>
            <person name="Li L."/>
            <person name="Xi Y."/>
            <person name="Qi Q."/>
            <person name="Li W."/>
            <person name="Zhang B."/>
            <person name="Hu W."/>
            <person name="Zhang Y."/>
            <person name="Tian X."/>
            <person name="Jiao Y."/>
            <person name="Liang X."/>
            <person name="Jin J."/>
            <person name="Gao L."/>
            <person name="Zheng W."/>
            <person name="Hao B."/>
            <person name="Liu S.-M."/>
            <person name="Wang W."/>
            <person name="Yuan L."/>
            <person name="Cao M."/>
            <person name="McDermott J."/>
            <person name="Samudrala R."/>
            <person name="Wang J."/>
            <person name="Wong G.K.-S."/>
            <person name="Yang H."/>
        </authorList>
    </citation>
    <scope>NUCLEOTIDE SEQUENCE [LARGE SCALE GENOMIC DNA]</scope>
    <source>
        <strain>cv. Nipponbare</strain>
    </source>
</reference>
<reference key="6">
    <citation type="journal article" date="2012" name="PLoS ONE">
        <title>Antagonistic actions of HLH/bHLH proteins are involved in grain length and weight in rice.</title>
        <authorList>
            <person name="Heang D."/>
            <person name="Sassa H."/>
        </authorList>
    </citation>
    <scope>FUNCTION</scope>
    <scope>INTERACTION WITH APG</scope>
    <scope>SUBCELLULAR LOCATION</scope>
</reference>
<dbReference type="EMBL" id="DP000009">
    <property type="protein sequence ID" value="ABF94217.1"/>
    <property type="status" value="ALT_SEQ"/>
    <property type="molecule type" value="Genomic_DNA"/>
</dbReference>
<dbReference type="EMBL" id="AP008209">
    <property type="protein sequence ID" value="BAF11026.1"/>
    <property type="molecule type" value="Genomic_DNA"/>
</dbReference>
<dbReference type="EMBL" id="AP014959">
    <property type="protein sequence ID" value="BAS82534.1"/>
    <property type="molecule type" value="Genomic_DNA"/>
</dbReference>
<dbReference type="EMBL" id="CM000140">
    <property type="protein sequence ID" value="EAZ25749.1"/>
    <property type="molecule type" value="Genomic_DNA"/>
</dbReference>
<dbReference type="RefSeq" id="XP_015629922.1">
    <property type="nucleotide sequence ID" value="XM_015774436.1"/>
</dbReference>
<dbReference type="SMR" id="Q0DUR2"/>
<dbReference type="FunCoup" id="Q0DUR2">
    <property type="interactions" value="1142"/>
</dbReference>
<dbReference type="STRING" id="39947.Q0DUR2"/>
<dbReference type="PaxDb" id="39947-Q0DUR2"/>
<dbReference type="EnsemblPlants" id="Os03t0171300-01">
    <property type="protein sequence ID" value="Os03t0171300-01"/>
    <property type="gene ID" value="Os03g0171300"/>
</dbReference>
<dbReference type="Gramene" id="Os03t0171300-01">
    <property type="protein sequence ID" value="Os03t0171300-01"/>
    <property type="gene ID" value="Os03g0171300"/>
</dbReference>
<dbReference type="KEGG" id="dosa:Os03g0171300"/>
<dbReference type="eggNOG" id="ENOG502S4KP">
    <property type="taxonomic scope" value="Eukaryota"/>
</dbReference>
<dbReference type="HOGENOM" id="CLU_183267_0_0_1"/>
<dbReference type="InParanoid" id="Q0DUR2"/>
<dbReference type="OMA" id="LPEIHNR"/>
<dbReference type="OrthoDB" id="10521633at2759"/>
<dbReference type="Proteomes" id="UP000000763">
    <property type="component" value="Chromosome 3"/>
</dbReference>
<dbReference type="Proteomes" id="UP000007752">
    <property type="component" value="Chromosome 3"/>
</dbReference>
<dbReference type="Proteomes" id="UP000059680">
    <property type="component" value="Chromosome 3"/>
</dbReference>
<dbReference type="GO" id="GO:0005634">
    <property type="term" value="C:nucleus"/>
    <property type="evidence" value="ECO:0000314"/>
    <property type="project" value="UniProtKB"/>
</dbReference>
<dbReference type="GO" id="GO:0046983">
    <property type="term" value="F:protein dimerization activity"/>
    <property type="evidence" value="ECO:0007669"/>
    <property type="project" value="InterPro"/>
</dbReference>
<dbReference type="GO" id="GO:0009742">
    <property type="term" value="P:brassinosteroid mediated signaling pathway"/>
    <property type="evidence" value="ECO:0007669"/>
    <property type="project" value="UniProtKB-KW"/>
</dbReference>
<dbReference type="GO" id="GO:0006355">
    <property type="term" value="P:regulation of DNA-templated transcription"/>
    <property type="evidence" value="ECO:0007669"/>
    <property type="project" value="InterPro"/>
</dbReference>
<dbReference type="GO" id="GO:0080113">
    <property type="term" value="P:regulation of seed growth"/>
    <property type="evidence" value="ECO:0000315"/>
    <property type="project" value="UniProtKB"/>
</dbReference>
<dbReference type="FunFam" id="4.10.280.10:FF:000082">
    <property type="entry name" value="Transcription factor ILI6"/>
    <property type="match status" value="1"/>
</dbReference>
<dbReference type="Gene3D" id="4.10.280.10">
    <property type="entry name" value="Helix-loop-helix DNA-binding domain"/>
    <property type="match status" value="1"/>
</dbReference>
<dbReference type="InterPro" id="IPR011598">
    <property type="entry name" value="bHLH_dom"/>
</dbReference>
<dbReference type="InterPro" id="IPR036638">
    <property type="entry name" value="HLH_DNA-bd_sf"/>
</dbReference>
<dbReference type="InterPro" id="IPR044293">
    <property type="entry name" value="PRE"/>
</dbReference>
<dbReference type="PANTHER" id="PTHR46446:SF38">
    <property type="entry name" value="TRANSCRIPTION FACTOR ILI6"/>
    <property type="match status" value="1"/>
</dbReference>
<dbReference type="PANTHER" id="PTHR46446">
    <property type="entry name" value="TRANSCRIPTION FACTOR PRE"/>
    <property type="match status" value="1"/>
</dbReference>
<dbReference type="Pfam" id="PF23174">
    <property type="entry name" value="bHLH_ILI"/>
    <property type="match status" value="1"/>
</dbReference>
<dbReference type="SUPFAM" id="SSF47459">
    <property type="entry name" value="HLH, helix-loop-helix DNA-binding domain"/>
    <property type="match status" value="1"/>
</dbReference>
<dbReference type="PROSITE" id="PS50888">
    <property type="entry name" value="BHLH"/>
    <property type="match status" value="1"/>
</dbReference>
<keyword id="KW-1070">Brassinosteroid signaling pathway</keyword>
<keyword id="KW-0341">Growth regulation</keyword>
<keyword id="KW-0539">Nucleus</keyword>
<keyword id="KW-1185">Reference proteome</keyword>
<keyword id="KW-0804">Transcription</keyword>
<keyword id="KW-0805">Transcription regulation</keyword>